<comment type="function">
    <text evidence="1">Probable transcription factor that may be involved in stress responses.</text>
</comment>
<comment type="subcellular location">
    <subcellularLocation>
        <location evidence="4">Nucleus</location>
    </subcellularLocation>
</comment>
<keyword id="KW-0479">Metal-binding</keyword>
<keyword id="KW-0539">Nucleus</keyword>
<keyword id="KW-1185">Reference proteome</keyword>
<keyword id="KW-0677">Repeat</keyword>
<keyword id="KW-0804">Transcription</keyword>
<keyword id="KW-0805">Transcription regulation</keyword>
<keyword id="KW-0862">Zinc</keyword>
<keyword id="KW-0863">Zinc-finger</keyword>
<organism>
    <name type="scientific">Arabidopsis thaliana</name>
    <name type="common">Mouse-ear cress</name>
    <dbReference type="NCBI Taxonomy" id="3702"/>
    <lineage>
        <taxon>Eukaryota</taxon>
        <taxon>Viridiplantae</taxon>
        <taxon>Streptophyta</taxon>
        <taxon>Embryophyta</taxon>
        <taxon>Tracheophyta</taxon>
        <taxon>Spermatophyta</taxon>
        <taxon>Magnoliopsida</taxon>
        <taxon>eudicotyledons</taxon>
        <taxon>Gunneridae</taxon>
        <taxon>Pentapetalae</taxon>
        <taxon>rosids</taxon>
        <taxon>malvids</taxon>
        <taxon>Brassicales</taxon>
        <taxon>Brassicaceae</taxon>
        <taxon>Camelineae</taxon>
        <taxon>Arabidopsis</taxon>
    </lineage>
</organism>
<gene>
    <name type="primary">ZAT9</name>
    <name type="ordered locus">At3g60580</name>
    <name type="ORF">T8B10.240</name>
</gene>
<evidence type="ECO:0000250" key="1"/>
<evidence type="ECO:0000255" key="2">
    <source>
        <dbReference type="PROSITE-ProRule" id="PRU00042"/>
    </source>
</evidence>
<evidence type="ECO:0000256" key="3">
    <source>
        <dbReference type="SAM" id="MobiDB-lite"/>
    </source>
</evidence>
<evidence type="ECO:0000305" key="4"/>
<reference key="1">
    <citation type="journal article" date="2000" name="Nature">
        <title>Sequence and analysis of chromosome 3 of the plant Arabidopsis thaliana.</title>
        <authorList>
            <person name="Salanoubat M."/>
            <person name="Lemcke K."/>
            <person name="Rieger M."/>
            <person name="Ansorge W."/>
            <person name="Unseld M."/>
            <person name="Fartmann B."/>
            <person name="Valle G."/>
            <person name="Bloecker H."/>
            <person name="Perez-Alonso M."/>
            <person name="Obermaier B."/>
            <person name="Delseny M."/>
            <person name="Boutry M."/>
            <person name="Grivell L.A."/>
            <person name="Mache R."/>
            <person name="Puigdomenech P."/>
            <person name="De Simone V."/>
            <person name="Choisne N."/>
            <person name="Artiguenave F."/>
            <person name="Robert C."/>
            <person name="Brottier P."/>
            <person name="Wincker P."/>
            <person name="Cattolico L."/>
            <person name="Weissenbach J."/>
            <person name="Saurin W."/>
            <person name="Quetier F."/>
            <person name="Schaefer M."/>
            <person name="Mueller-Auer S."/>
            <person name="Gabel C."/>
            <person name="Fuchs M."/>
            <person name="Benes V."/>
            <person name="Wurmbach E."/>
            <person name="Drzonek H."/>
            <person name="Erfle H."/>
            <person name="Jordan N."/>
            <person name="Bangert S."/>
            <person name="Wiedelmann R."/>
            <person name="Kranz H."/>
            <person name="Voss H."/>
            <person name="Holland R."/>
            <person name="Brandt P."/>
            <person name="Nyakatura G."/>
            <person name="Vezzi A."/>
            <person name="D'Angelo M."/>
            <person name="Pallavicini A."/>
            <person name="Toppo S."/>
            <person name="Simionati B."/>
            <person name="Conrad A."/>
            <person name="Hornischer K."/>
            <person name="Kauer G."/>
            <person name="Loehnert T.-H."/>
            <person name="Nordsiek G."/>
            <person name="Reichelt J."/>
            <person name="Scharfe M."/>
            <person name="Schoen O."/>
            <person name="Bargues M."/>
            <person name="Terol J."/>
            <person name="Climent J."/>
            <person name="Navarro P."/>
            <person name="Collado C."/>
            <person name="Perez-Perez A."/>
            <person name="Ottenwaelder B."/>
            <person name="Duchemin D."/>
            <person name="Cooke R."/>
            <person name="Laudie M."/>
            <person name="Berger-Llauro C."/>
            <person name="Purnelle B."/>
            <person name="Masuy D."/>
            <person name="de Haan M."/>
            <person name="Maarse A.C."/>
            <person name="Alcaraz J.-P."/>
            <person name="Cottet A."/>
            <person name="Casacuberta E."/>
            <person name="Monfort A."/>
            <person name="Argiriou A."/>
            <person name="Flores M."/>
            <person name="Liguori R."/>
            <person name="Vitale D."/>
            <person name="Mannhaupt G."/>
            <person name="Haase D."/>
            <person name="Schoof H."/>
            <person name="Rudd S."/>
            <person name="Zaccaria P."/>
            <person name="Mewes H.-W."/>
            <person name="Mayer K.F.X."/>
            <person name="Kaul S."/>
            <person name="Town C.D."/>
            <person name="Koo H.L."/>
            <person name="Tallon L.J."/>
            <person name="Jenkins J."/>
            <person name="Rooney T."/>
            <person name="Rizzo M."/>
            <person name="Walts A."/>
            <person name="Utterback T."/>
            <person name="Fujii C.Y."/>
            <person name="Shea T.P."/>
            <person name="Creasy T.H."/>
            <person name="Haas B."/>
            <person name="Maiti R."/>
            <person name="Wu D."/>
            <person name="Peterson J."/>
            <person name="Van Aken S."/>
            <person name="Pai G."/>
            <person name="Militscher J."/>
            <person name="Sellers P."/>
            <person name="Gill J.E."/>
            <person name="Feldblyum T.V."/>
            <person name="Preuss D."/>
            <person name="Lin X."/>
            <person name="Nierman W.C."/>
            <person name="Salzberg S.L."/>
            <person name="White O."/>
            <person name="Venter J.C."/>
            <person name="Fraser C.M."/>
            <person name="Kaneko T."/>
            <person name="Nakamura Y."/>
            <person name="Sato S."/>
            <person name="Kato T."/>
            <person name="Asamizu E."/>
            <person name="Sasamoto S."/>
            <person name="Kimura T."/>
            <person name="Idesawa K."/>
            <person name="Kawashima K."/>
            <person name="Kishida Y."/>
            <person name="Kiyokawa C."/>
            <person name="Kohara M."/>
            <person name="Matsumoto M."/>
            <person name="Matsuno A."/>
            <person name="Muraki A."/>
            <person name="Nakayama S."/>
            <person name="Nakazaki N."/>
            <person name="Shinpo S."/>
            <person name="Takeuchi C."/>
            <person name="Wada T."/>
            <person name="Watanabe A."/>
            <person name="Yamada M."/>
            <person name="Yasuda M."/>
            <person name="Tabata S."/>
        </authorList>
    </citation>
    <scope>NUCLEOTIDE SEQUENCE [LARGE SCALE GENOMIC DNA]</scope>
    <source>
        <strain>cv. Columbia</strain>
    </source>
</reference>
<reference key="2">
    <citation type="journal article" date="2017" name="Plant J.">
        <title>Araport11: a complete reannotation of the Arabidopsis thaliana reference genome.</title>
        <authorList>
            <person name="Cheng C.Y."/>
            <person name="Krishnakumar V."/>
            <person name="Chan A.P."/>
            <person name="Thibaud-Nissen F."/>
            <person name="Schobel S."/>
            <person name="Town C.D."/>
        </authorList>
    </citation>
    <scope>GENOME REANNOTATION</scope>
    <source>
        <strain>cv. Columbia</strain>
    </source>
</reference>
<reference key="3">
    <citation type="journal article" date="2002" name="Science">
        <title>Functional annotation of a full-length Arabidopsis cDNA collection.</title>
        <authorList>
            <person name="Seki M."/>
            <person name="Narusaka M."/>
            <person name="Kamiya A."/>
            <person name="Ishida J."/>
            <person name="Satou M."/>
            <person name="Sakurai T."/>
            <person name="Nakajima M."/>
            <person name="Enju A."/>
            <person name="Akiyama K."/>
            <person name="Oono Y."/>
            <person name="Muramatsu M."/>
            <person name="Hayashizaki Y."/>
            <person name="Kawai J."/>
            <person name="Carninci P."/>
            <person name="Itoh M."/>
            <person name="Ishii Y."/>
            <person name="Arakawa T."/>
            <person name="Shibata K."/>
            <person name="Shinagawa A."/>
            <person name="Shinozaki K."/>
        </authorList>
    </citation>
    <scope>NUCLEOTIDE SEQUENCE [LARGE SCALE MRNA]</scope>
    <source>
        <strain>cv. Columbia</strain>
    </source>
</reference>
<reference key="4">
    <citation type="journal article" date="2003" name="Science">
        <title>Empirical analysis of transcriptional activity in the Arabidopsis genome.</title>
        <authorList>
            <person name="Yamada K."/>
            <person name="Lim J."/>
            <person name="Dale J.M."/>
            <person name="Chen H."/>
            <person name="Shinn P."/>
            <person name="Palm C.J."/>
            <person name="Southwick A.M."/>
            <person name="Wu H.C."/>
            <person name="Kim C.J."/>
            <person name="Nguyen M."/>
            <person name="Pham P.K."/>
            <person name="Cheuk R.F."/>
            <person name="Karlin-Newmann G."/>
            <person name="Liu S.X."/>
            <person name="Lam B."/>
            <person name="Sakano H."/>
            <person name="Wu T."/>
            <person name="Yu G."/>
            <person name="Miranda M."/>
            <person name="Quach H.L."/>
            <person name="Tripp M."/>
            <person name="Chang C.H."/>
            <person name="Lee J.M."/>
            <person name="Toriumi M.J."/>
            <person name="Chan M.M."/>
            <person name="Tang C.C."/>
            <person name="Onodera C.S."/>
            <person name="Deng J.M."/>
            <person name="Akiyama K."/>
            <person name="Ansari Y."/>
            <person name="Arakawa T."/>
            <person name="Banh J."/>
            <person name="Banno F."/>
            <person name="Bowser L."/>
            <person name="Brooks S.Y."/>
            <person name="Carninci P."/>
            <person name="Chao Q."/>
            <person name="Choy N."/>
            <person name="Enju A."/>
            <person name="Goldsmith A.D."/>
            <person name="Gurjal M."/>
            <person name="Hansen N.F."/>
            <person name="Hayashizaki Y."/>
            <person name="Johnson-Hopson C."/>
            <person name="Hsuan V.W."/>
            <person name="Iida K."/>
            <person name="Karnes M."/>
            <person name="Khan S."/>
            <person name="Koesema E."/>
            <person name="Ishida J."/>
            <person name="Jiang P.X."/>
            <person name="Jones T."/>
            <person name="Kawai J."/>
            <person name="Kamiya A."/>
            <person name="Meyers C."/>
            <person name="Nakajima M."/>
            <person name="Narusaka M."/>
            <person name="Seki M."/>
            <person name="Sakurai T."/>
            <person name="Satou M."/>
            <person name="Tamse R."/>
            <person name="Vaysberg M."/>
            <person name="Wallender E.K."/>
            <person name="Wong C."/>
            <person name="Yamamura Y."/>
            <person name="Yuan S."/>
            <person name="Shinozaki K."/>
            <person name="Davis R.W."/>
            <person name="Theologis A."/>
            <person name="Ecker J.R."/>
        </authorList>
    </citation>
    <scope>NUCLEOTIDE SEQUENCE [LARGE SCALE MRNA]</scope>
    <source>
        <strain>cv. Columbia</strain>
    </source>
</reference>
<feature type="chain" id="PRO_0000409718" description="Zinc finger protein ZAT9">
    <location>
        <begin position="1"/>
        <end position="288"/>
    </location>
</feature>
<feature type="zinc finger region" description="C2H2-type 1" evidence="2">
    <location>
        <begin position="4"/>
        <end position="26"/>
    </location>
</feature>
<feature type="zinc finger region" description="C2H2-type 2" evidence="2">
    <location>
        <begin position="173"/>
        <end position="195"/>
    </location>
</feature>
<feature type="zinc finger region" description="C2H2-type 3" evidence="2">
    <location>
        <begin position="224"/>
        <end position="246"/>
    </location>
</feature>
<feature type="region of interest" description="Disordered" evidence="3">
    <location>
        <begin position="20"/>
        <end position="82"/>
    </location>
</feature>
<feature type="region of interest" description="Disordered" evidence="3">
    <location>
        <begin position="101"/>
        <end position="123"/>
    </location>
</feature>
<feature type="region of interest" description="Disordered" evidence="3">
    <location>
        <begin position="189"/>
        <end position="210"/>
    </location>
</feature>
<feature type="compositionally biased region" description="Polar residues" evidence="3">
    <location>
        <begin position="37"/>
        <end position="52"/>
    </location>
</feature>
<feature type="sequence conflict" description="In Ref. 3; BAC43008 and 4; AAO63347." evidence="4" ref="3 4">
    <original>R</original>
    <variation>Q</variation>
    <location>
        <position position="166"/>
    </location>
</feature>
<name>ZAT9_ARATH</name>
<proteinExistence type="evidence at transcript level"/>
<dbReference type="EMBL" id="AL138646">
    <property type="protein sequence ID" value="CAB81844.1"/>
    <property type="molecule type" value="Genomic_DNA"/>
</dbReference>
<dbReference type="EMBL" id="CP002686">
    <property type="protein sequence ID" value="AEE80081.1"/>
    <property type="molecule type" value="Genomic_DNA"/>
</dbReference>
<dbReference type="EMBL" id="AK118399">
    <property type="protein sequence ID" value="BAC43008.1"/>
    <property type="molecule type" value="mRNA"/>
</dbReference>
<dbReference type="EMBL" id="BT005283">
    <property type="protein sequence ID" value="AAO63347.1"/>
    <property type="molecule type" value="mRNA"/>
</dbReference>
<dbReference type="PIR" id="T47869">
    <property type="entry name" value="T47869"/>
</dbReference>
<dbReference type="RefSeq" id="NP_191617.1">
    <property type="nucleotide sequence ID" value="NM_115922.3"/>
</dbReference>
<dbReference type="FunCoup" id="Q9M202">
    <property type="interactions" value="3"/>
</dbReference>
<dbReference type="IntAct" id="Q9M202">
    <property type="interactions" value="1"/>
</dbReference>
<dbReference type="STRING" id="3702.Q9M202"/>
<dbReference type="PaxDb" id="3702-AT3G60580.1"/>
<dbReference type="EnsemblPlants" id="AT3G60580.1">
    <property type="protein sequence ID" value="AT3G60580.1"/>
    <property type="gene ID" value="AT3G60580"/>
</dbReference>
<dbReference type="GeneID" id="825229"/>
<dbReference type="Gramene" id="AT3G60580.1">
    <property type="protein sequence ID" value="AT3G60580.1"/>
    <property type="gene ID" value="AT3G60580"/>
</dbReference>
<dbReference type="KEGG" id="ath:AT3G60580"/>
<dbReference type="Araport" id="AT3G60580"/>
<dbReference type="TAIR" id="AT3G60580"/>
<dbReference type="eggNOG" id="KOG1721">
    <property type="taxonomic scope" value="Eukaryota"/>
</dbReference>
<dbReference type="HOGENOM" id="CLU_029000_0_0_1"/>
<dbReference type="InParanoid" id="Q9M202"/>
<dbReference type="OMA" id="MESYKCR"/>
<dbReference type="PhylomeDB" id="Q9M202"/>
<dbReference type="PRO" id="PR:Q9M202"/>
<dbReference type="Proteomes" id="UP000006548">
    <property type="component" value="Chromosome 3"/>
</dbReference>
<dbReference type="ExpressionAtlas" id="Q9M202">
    <property type="expression patterns" value="baseline and differential"/>
</dbReference>
<dbReference type="GO" id="GO:0005634">
    <property type="term" value="C:nucleus"/>
    <property type="evidence" value="ECO:0007669"/>
    <property type="project" value="UniProtKB-SubCell"/>
</dbReference>
<dbReference type="GO" id="GO:0003700">
    <property type="term" value="F:DNA-binding transcription factor activity"/>
    <property type="evidence" value="ECO:0000250"/>
    <property type="project" value="TAIR"/>
</dbReference>
<dbReference type="GO" id="GO:0000976">
    <property type="term" value="F:transcription cis-regulatory region binding"/>
    <property type="evidence" value="ECO:0000353"/>
    <property type="project" value="TAIR"/>
</dbReference>
<dbReference type="GO" id="GO:0008270">
    <property type="term" value="F:zinc ion binding"/>
    <property type="evidence" value="ECO:0007669"/>
    <property type="project" value="UniProtKB-KW"/>
</dbReference>
<dbReference type="GO" id="GO:0006355">
    <property type="term" value="P:regulation of DNA-templated transcription"/>
    <property type="evidence" value="ECO:0000304"/>
    <property type="project" value="TAIR"/>
</dbReference>
<dbReference type="Gene3D" id="3.30.160.60">
    <property type="entry name" value="Classic Zinc Finger"/>
    <property type="match status" value="2"/>
</dbReference>
<dbReference type="InterPro" id="IPR044303">
    <property type="entry name" value="ZAT1/4/9"/>
</dbReference>
<dbReference type="InterPro" id="IPR036236">
    <property type="entry name" value="Znf_C2H2_sf"/>
</dbReference>
<dbReference type="InterPro" id="IPR013087">
    <property type="entry name" value="Znf_C2H2_type"/>
</dbReference>
<dbReference type="PANTHER" id="PTHR46326">
    <property type="entry name" value="ZINC FINGER PROTEIN ZAT1-RELATED"/>
    <property type="match status" value="1"/>
</dbReference>
<dbReference type="PANTHER" id="PTHR46326:SF21">
    <property type="entry name" value="ZINC FINGER PROTEIN ZAT9"/>
    <property type="match status" value="1"/>
</dbReference>
<dbReference type="Pfam" id="PF13912">
    <property type="entry name" value="zf-C2H2_6"/>
    <property type="match status" value="3"/>
</dbReference>
<dbReference type="SMART" id="SM00355">
    <property type="entry name" value="ZnF_C2H2"/>
    <property type="match status" value="3"/>
</dbReference>
<dbReference type="SUPFAM" id="SSF57667">
    <property type="entry name" value="beta-beta-alpha zinc fingers"/>
    <property type="match status" value="1"/>
</dbReference>
<dbReference type="PROSITE" id="PS00028">
    <property type="entry name" value="ZINC_FINGER_C2H2_1"/>
    <property type="match status" value="3"/>
</dbReference>
<dbReference type="PROSITE" id="PS50157">
    <property type="entry name" value="ZINC_FINGER_C2H2_2"/>
    <property type="match status" value="3"/>
</dbReference>
<sequence length="288" mass="32733">MESYKCRVCFKSFVNGKALGGHMRSHMSNSHEEEQRPSQLSYETESDVSSSDPKFAFTSSVLLEDGESESESSRNVINLTRKRSKRTRKLDSFVTKKVKTSQLGYKPESDQEPPHSSASDTTTEEDLAFCLMMLSRDKWKKNKSNKEVVEEIETEEESEGYNKINRATTKGRYKCETCGKVFKSYQALGGHRASHKKNRVSNNKTEQRSETEYDNVVVVAKRIHECPICLRVFASGQALGGHKRSHGVGNLSVNQQRRVHRNESVKQRMIDLNLPAPTEEDEVSVVFQ</sequence>
<protein>
    <recommendedName>
        <fullName>Zinc finger protein ZAT9</fullName>
    </recommendedName>
</protein>
<accession>Q9M202</accession>
<accession>Q8GX74</accession>